<sequence length="249" mass="27676">MAKKKDTPGDGEFPGFSDTLQRTPKLEKPHYAGHRDRLKQRFRDAPDALADYELLELLLFRAIRRADTKPIAKALLNRFGSIAEVLAAPENLIAEIPGAGPTVALELKLVEAIAKRSARSTVMEREVLGSWDKVINYCTAAMAFETREQFRILFLDKKNKLIADEVQQTGTVDHTPVYPREVVKRALELSATAIILVHNHPSGDPTPSRADIDMTKQLVNAAKALNITVHDHVIIGKHGHASLRSLRLI</sequence>
<keyword id="KW-0378">Hydrolase</keyword>
<keyword id="KW-0479">Metal-binding</keyword>
<keyword id="KW-0482">Metalloprotease</keyword>
<keyword id="KW-0645">Protease</keyword>
<keyword id="KW-0862">Zinc</keyword>
<organism>
    <name type="scientific">Brucella suis biovar 1 (strain 1330)</name>
    <dbReference type="NCBI Taxonomy" id="204722"/>
    <lineage>
        <taxon>Bacteria</taxon>
        <taxon>Pseudomonadati</taxon>
        <taxon>Pseudomonadota</taxon>
        <taxon>Alphaproteobacteria</taxon>
        <taxon>Hyphomicrobiales</taxon>
        <taxon>Brucellaceae</taxon>
        <taxon>Brucella/Ochrobactrum group</taxon>
        <taxon>Brucella</taxon>
    </lineage>
</organism>
<proteinExistence type="inferred from homology"/>
<protein>
    <recommendedName>
        <fullName>UPF0758 protein BR1283/BS1330_I1279</fullName>
    </recommendedName>
</protein>
<accession>P65956</accession>
<accession>G0KAP2</accession>
<accession>Q8YHS8</accession>
<evidence type="ECO:0000255" key="1">
    <source>
        <dbReference type="PROSITE-ProRule" id="PRU01182"/>
    </source>
</evidence>
<evidence type="ECO:0000256" key="2">
    <source>
        <dbReference type="SAM" id="MobiDB-lite"/>
    </source>
</evidence>
<evidence type="ECO:0000305" key="3"/>
<dbReference type="EMBL" id="AE014291">
    <property type="protein sequence ID" value="AAN30201.1"/>
    <property type="molecule type" value="Genomic_DNA"/>
</dbReference>
<dbReference type="EMBL" id="CP002997">
    <property type="protein sequence ID" value="AEM18619.1"/>
    <property type="molecule type" value="Genomic_DNA"/>
</dbReference>
<dbReference type="RefSeq" id="WP_002964401.1">
    <property type="nucleotide sequence ID" value="NZ_KN046804.1"/>
</dbReference>
<dbReference type="SMR" id="P65956"/>
<dbReference type="GeneID" id="93016397"/>
<dbReference type="KEGG" id="bms:BR1283"/>
<dbReference type="KEGG" id="bsi:BS1330_I1279"/>
<dbReference type="PATRIC" id="fig|204722.21.peg.3702"/>
<dbReference type="HOGENOM" id="CLU_073529_0_0_5"/>
<dbReference type="PhylomeDB" id="P65956"/>
<dbReference type="Proteomes" id="UP000007104">
    <property type="component" value="Chromosome I"/>
</dbReference>
<dbReference type="GO" id="GO:0046872">
    <property type="term" value="F:metal ion binding"/>
    <property type="evidence" value="ECO:0007669"/>
    <property type="project" value="UniProtKB-KW"/>
</dbReference>
<dbReference type="GO" id="GO:0008237">
    <property type="term" value="F:metallopeptidase activity"/>
    <property type="evidence" value="ECO:0007669"/>
    <property type="project" value="UniProtKB-KW"/>
</dbReference>
<dbReference type="GO" id="GO:0006508">
    <property type="term" value="P:proteolysis"/>
    <property type="evidence" value="ECO:0007669"/>
    <property type="project" value="UniProtKB-KW"/>
</dbReference>
<dbReference type="CDD" id="cd08071">
    <property type="entry name" value="MPN_DUF2466"/>
    <property type="match status" value="1"/>
</dbReference>
<dbReference type="Gene3D" id="1.10.150.20">
    <property type="entry name" value="5' to 3' exonuclease, C-terminal subdomain"/>
    <property type="match status" value="1"/>
</dbReference>
<dbReference type="Gene3D" id="3.40.140.10">
    <property type="entry name" value="Cytidine Deaminase, domain 2"/>
    <property type="match status" value="1"/>
</dbReference>
<dbReference type="InterPro" id="IPR037518">
    <property type="entry name" value="MPN"/>
</dbReference>
<dbReference type="InterPro" id="IPR025657">
    <property type="entry name" value="RadC_JAB"/>
</dbReference>
<dbReference type="InterPro" id="IPR010994">
    <property type="entry name" value="RuvA_2-like"/>
</dbReference>
<dbReference type="InterPro" id="IPR001405">
    <property type="entry name" value="UPF0758"/>
</dbReference>
<dbReference type="InterPro" id="IPR020891">
    <property type="entry name" value="UPF0758_CS"/>
</dbReference>
<dbReference type="NCBIfam" id="NF000642">
    <property type="entry name" value="PRK00024.1"/>
    <property type="match status" value="1"/>
</dbReference>
<dbReference type="NCBIfam" id="TIGR00608">
    <property type="entry name" value="radc"/>
    <property type="match status" value="1"/>
</dbReference>
<dbReference type="PANTHER" id="PTHR30471">
    <property type="entry name" value="DNA REPAIR PROTEIN RADC"/>
    <property type="match status" value="1"/>
</dbReference>
<dbReference type="PANTHER" id="PTHR30471:SF3">
    <property type="entry name" value="UPF0758 PROTEIN YEES-RELATED"/>
    <property type="match status" value="1"/>
</dbReference>
<dbReference type="Pfam" id="PF04002">
    <property type="entry name" value="RadC"/>
    <property type="match status" value="1"/>
</dbReference>
<dbReference type="SUPFAM" id="SSF102712">
    <property type="entry name" value="JAB1/MPN domain"/>
    <property type="match status" value="1"/>
</dbReference>
<dbReference type="SUPFAM" id="SSF47781">
    <property type="entry name" value="RuvA domain 2-like"/>
    <property type="match status" value="1"/>
</dbReference>
<dbReference type="PROSITE" id="PS50249">
    <property type="entry name" value="MPN"/>
    <property type="match status" value="1"/>
</dbReference>
<dbReference type="PROSITE" id="PS01302">
    <property type="entry name" value="UPF0758"/>
    <property type="match status" value="1"/>
</dbReference>
<gene>
    <name type="primary">radC</name>
    <name type="ordered locus">BR1283</name>
    <name type="ordered locus">BS1330_I1279</name>
</gene>
<feature type="chain" id="PRO_0000190689" description="UPF0758 protein BR1283/BS1330_I1279">
    <location>
        <begin position="1"/>
        <end position="249"/>
    </location>
</feature>
<feature type="domain" description="MPN" evidence="1">
    <location>
        <begin position="127"/>
        <end position="249"/>
    </location>
</feature>
<feature type="region of interest" description="Disordered" evidence="2">
    <location>
        <begin position="1"/>
        <end position="34"/>
    </location>
</feature>
<feature type="short sequence motif" description="JAMM motif" evidence="1">
    <location>
        <begin position="198"/>
        <end position="211"/>
    </location>
</feature>
<feature type="compositionally biased region" description="Basic and acidic residues" evidence="2">
    <location>
        <begin position="24"/>
        <end position="34"/>
    </location>
</feature>
<feature type="binding site" evidence="1">
    <location>
        <position position="198"/>
    </location>
    <ligand>
        <name>Zn(2+)</name>
        <dbReference type="ChEBI" id="CHEBI:29105"/>
        <note>catalytic</note>
    </ligand>
</feature>
<feature type="binding site" evidence="1">
    <location>
        <position position="200"/>
    </location>
    <ligand>
        <name>Zn(2+)</name>
        <dbReference type="ChEBI" id="CHEBI:29105"/>
        <note>catalytic</note>
    </ligand>
</feature>
<feature type="binding site" evidence="1">
    <location>
        <position position="211"/>
    </location>
    <ligand>
        <name>Zn(2+)</name>
        <dbReference type="ChEBI" id="CHEBI:29105"/>
        <note>catalytic</note>
    </ligand>
</feature>
<comment type="similarity">
    <text evidence="3">Belongs to the UPF0758 family.</text>
</comment>
<name>Y1283_BRUSU</name>
<reference key="1">
    <citation type="journal article" date="2002" name="Proc. Natl. Acad. Sci. U.S.A.">
        <title>The Brucella suis genome reveals fundamental similarities between animal and plant pathogens and symbionts.</title>
        <authorList>
            <person name="Paulsen I.T."/>
            <person name="Seshadri R."/>
            <person name="Nelson K.E."/>
            <person name="Eisen J.A."/>
            <person name="Heidelberg J.F."/>
            <person name="Read T.D."/>
            <person name="Dodson R.J."/>
            <person name="Umayam L.A."/>
            <person name="Brinkac L.M."/>
            <person name="Beanan M.J."/>
            <person name="Daugherty S.C."/>
            <person name="DeBoy R.T."/>
            <person name="Durkin A.S."/>
            <person name="Kolonay J.F."/>
            <person name="Madupu R."/>
            <person name="Nelson W.C."/>
            <person name="Ayodeji B."/>
            <person name="Kraul M."/>
            <person name="Shetty J."/>
            <person name="Malek J.A."/>
            <person name="Van Aken S.E."/>
            <person name="Riedmuller S."/>
            <person name="Tettelin H."/>
            <person name="Gill S.R."/>
            <person name="White O."/>
            <person name="Salzberg S.L."/>
            <person name="Hoover D.L."/>
            <person name="Lindler L.E."/>
            <person name="Halling S.M."/>
            <person name="Boyle S.M."/>
            <person name="Fraser C.M."/>
        </authorList>
    </citation>
    <scope>NUCLEOTIDE SEQUENCE [LARGE SCALE GENOMIC DNA]</scope>
    <source>
        <strain>1330</strain>
    </source>
</reference>
<reference key="2">
    <citation type="journal article" date="2011" name="J. Bacteriol.">
        <title>Revised genome sequence of Brucella suis 1330.</title>
        <authorList>
            <person name="Tae H."/>
            <person name="Shallom S."/>
            <person name="Settlage R."/>
            <person name="Preston D."/>
            <person name="Adams L.G."/>
            <person name="Garner H.R."/>
        </authorList>
    </citation>
    <scope>NUCLEOTIDE SEQUENCE [LARGE SCALE GENOMIC DNA]</scope>
    <source>
        <strain>1330</strain>
    </source>
</reference>